<gene>
    <name evidence="5" type="primary">OR4E2</name>
</gene>
<feature type="chain" id="PRO_0000150544" description="Olfactory receptor 4E2">
    <location>
        <begin position="1"/>
        <end position="313"/>
    </location>
</feature>
<feature type="topological domain" description="Extracellular" evidence="2">
    <location>
        <begin position="1"/>
        <end position="25"/>
    </location>
</feature>
<feature type="transmembrane region" description="Helical; Name=1" evidence="2">
    <location>
        <begin position="26"/>
        <end position="49"/>
    </location>
</feature>
<feature type="topological domain" description="Cytoplasmic" evidence="2">
    <location>
        <begin position="50"/>
        <end position="57"/>
    </location>
</feature>
<feature type="transmembrane region" description="Helical; Name=2" evidence="2">
    <location>
        <begin position="58"/>
        <end position="79"/>
    </location>
</feature>
<feature type="topological domain" description="Extracellular" evidence="2">
    <location>
        <begin position="80"/>
        <end position="100"/>
    </location>
</feature>
<feature type="transmembrane region" description="Helical; Name=3" evidence="2">
    <location>
        <begin position="101"/>
        <end position="120"/>
    </location>
</feature>
<feature type="topological domain" description="Cytoplasmic" evidence="2">
    <location>
        <begin position="121"/>
        <end position="139"/>
    </location>
</feature>
<feature type="transmembrane region" description="Helical; Name=4" evidence="2">
    <location>
        <begin position="140"/>
        <end position="158"/>
    </location>
</feature>
<feature type="topological domain" description="Extracellular" evidence="2">
    <location>
        <begin position="159"/>
        <end position="195"/>
    </location>
</feature>
<feature type="transmembrane region" description="Helical; Name=5" evidence="2">
    <location>
        <begin position="196"/>
        <end position="219"/>
    </location>
</feature>
<feature type="topological domain" description="Cytoplasmic" evidence="2">
    <location>
        <begin position="220"/>
        <end position="235"/>
    </location>
</feature>
<feature type="transmembrane region" description="Helical; Name=6" evidence="2">
    <location>
        <begin position="236"/>
        <end position="258"/>
    </location>
</feature>
<feature type="topological domain" description="Extracellular" evidence="2">
    <location>
        <begin position="259"/>
        <end position="269"/>
    </location>
</feature>
<feature type="transmembrane region" description="Helical; Name=7" evidence="2">
    <location>
        <begin position="270"/>
        <end position="289"/>
    </location>
</feature>
<feature type="topological domain" description="Cytoplasmic" evidence="2">
    <location>
        <begin position="290"/>
        <end position="313"/>
    </location>
</feature>
<feature type="binding site" evidence="1">
    <location>
        <position position="105"/>
    </location>
    <ligand>
        <name>Cu cation</name>
        <dbReference type="ChEBI" id="CHEBI:23378"/>
    </ligand>
</feature>
<feature type="binding site" evidence="1">
    <location>
        <position position="109"/>
    </location>
    <ligand>
        <name>Cu cation</name>
        <dbReference type="ChEBI" id="CHEBI:23378"/>
    </ligand>
</feature>
<feature type="binding site" evidence="1">
    <location>
        <position position="260"/>
    </location>
    <ligand>
        <name>Cu cation</name>
        <dbReference type="ChEBI" id="CHEBI:23378"/>
    </ligand>
</feature>
<feature type="glycosylation site" description="N-linked (GlcNAc...) asparagine" evidence="2">
    <location>
        <position position="5"/>
    </location>
</feature>
<feature type="disulfide bond" evidence="3">
    <location>
        <begin position="97"/>
        <end position="179"/>
    </location>
</feature>
<feature type="sequence variant" id="VAR_034198" description="In dbSNP:rs2874103.">
    <original>V</original>
    <variation>M</variation>
    <location>
        <position position="118"/>
    </location>
</feature>
<feature type="sequence variant" id="VAR_034199" description="In dbSNP:rs970382.">
    <original>Q</original>
    <variation>R</variation>
    <location>
        <position position="234"/>
    </location>
</feature>
<name>OR4E2_HUMAN</name>
<evidence type="ECO:0000250" key="1">
    <source>
        <dbReference type="UniProtKB" id="Q7TQQ0"/>
    </source>
</evidence>
<evidence type="ECO:0000255" key="2"/>
<evidence type="ECO:0000255" key="3">
    <source>
        <dbReference type="PROSITE-ProRule" id="PRU00521"/>
    </source>
</evidence>
<evidence type="ECO:0000305" key="4"/>
<evidence type="ECO:0000312" key="5">
    <source>
        <dbReference type="HGNC" id="HGNC:8297"/>
    </source>
</evidence>
<sequence>MDSLNQTRVTEFVFLGLTDNRVLEMLFFMAFSAIYMLTLSGNILIIIATVFTPSLHTPMYFFLSNLSFIDICHSSVTVPKMLEGLLLERKTISFDNCITQLFFLHLFACAEIFLLIIVAYDRYVAICTPLHYPNVMNMRVCIQLVFALWLGGTVHSLGQTFLTIRLPYCGPNIIDSYFCDVPLVIKLACTDTYLTGILIVTNSGTISLSCFLAVVTSYMVILVSLRKHSAEGRQKALSTCSAHFMVVALFFGPCIFIYTRPDTSFSIDKVVSVFYTVVTPLLNPFIYTLRNEEVKSAMKQLRQRQVFFTKSYT</sequence>
<organism>
    <name type="scientific">Homo sapiens</name>
    <name type="common">Human</name>
    <dbReference type="NCBI Taxonomy" id="9606"/>
    <lineage>
        <taxon>Eukaryota</taxon>
        <taxon>Metazoa</taxon>
        <taxon>Chordata</taxon>
        <taxon>Craniata</taxon>
        <taxon>Vertebrata</taxon>
        <taxon>Euteleostomi</taxon>
        <taxon>Mammalia</taxon>
        <taxon>Eutheria</taxon>
        <taxon>Euarchontoglires</taxon>
        <taxon>Primates</taxon>
        <taxon>Haplorrhini</taxon>
        <taxon>Catarrhini</taxon>
        <taxon>Hominidae</taxon>
        <taxon>Homo</taxon>
    </lineage>
</organism>
<comment type="function">
    <text evidence="1">Olfactory receptor that is activated by the binding of organosulfur odorants with thioether groups such as (methylthio)methanethiol (MTMT) and bis(methylthiomethyl) disulfide (By similarity). Also binds odorants cis-cyclooctene and tert-butyl mercaptan (By similarity). The activity of this receptor is mediated by G proteins which activate adenylyl cyclase (By similarity).</text>
</comment>
<comment type="activity regulation">
    <text evidence="1">Copper binding enhances receptor activity in response to odorant binding.</text>
</comment>
<comment type="subcellular location">
    <subcellularLocation>
        <location evidence="1">Cell membrane</location>
        <topology evidence="1">Multi-pass membrane protein</topology>
    </subcellularLocation>
</comment>
<comment type="similarity">
    <text evidence="3">Belongs to the G-protein coupled receptor 1 family.</text>
</comment>
<comment type="online information" name="Human Olfactory Receptor Data Exploratorium (HORDE)">
    <link uri="http://genome.weizmann.ac.il/horde/card/index/symbol:OR4E2"/>
</comment>
<keyword id="KW-1003">Cell membrane</keyword>
<keyword id="KW-0186">Copper</keyword>
<keyword id="KW-1015">Disulfide bond</keyword>
<keyword id="KW-0297">G-protein coupled receptor</keyword>
<keyword id="KW-0325">Glycoprotein</keyword>
<keyword id="KW-0472">Membrane</keyword>
<keyword id="KW-0479">Metal-binding</keyword>
<keyword id="KW-0552">Olfaction</keyword>
<keyword id="KW-0675">Receptor</keyword>
<keyword id="KW-1185">Reference proteome</keyword>
<keyword id="KW-0716">Sensory transduction</keyword>
<keyword id="KW-0807">Transducer</keyword>
<keyword id="KW-0812">Transmembrane</keyword>
<keyword id="KW-1133">Transmembrane helix</keyword>
<accession>Q8NGC2</accession>
<accession>Q6IET6</accession>
<accession>Q96R62</accession>
<reference key="1">
    <citation type="submission" date="2001-07" db="EMBL/GenBank/DDBJ databases">
        <title>Genome-wide discovery and analysis of human seven transmembrane helix receptor genes.</title>
        <authorList>
            <person name="Suwa M."/>
            <person name="Sato T."/>
            <person name="Okouchi I."/>
            <person name="Arita M."/>
            <person name="Futami K."/>
            <person name="Matsumoto S."/>
            <person name="Tsutsumi S."/>
            <person name="Aburatani H."/>
            <person name="Asai K."/>
            <person name="Akiyama Y."/>
        </authorList>
    </citation>
    <scope>NUCLEOTIDE SEQUENCE [GENOMIC DNA]</scope>
</reference>
<reference key="2">
    <citation type="journal article" date="2002" name="Genomics">
        <title>DEFOG: a practical scheme for deciphering families of genes.</title>
        <authorList>
            <person name="Fuchs T."/>
            <person name="Malecova B."/>
            <person name="Linhart C."/>
            <person name="Sharan R."/>
            <person name="Khen M."/>
            <person name="Herwig R."/>
            <person name="Shmulevich D."/>
            <person name="Elkon R."/>
            <person name="Steinfath M."/>
            <person name="O'Brien J.K."/>
            <person name="Radelof U."/>
            <person name="Lehrach H."/>
            <person name="Lancet D."/>
            <person name="Shamir R."/>
        </authorList>
    </citation>
    <scope>NUCLEOTIDE SEQUENCE [GENOMIC DNA] OF 68-280</scope>
</reference>
<reference key="3">
    <citation type="journal article" date="2004" name="Proc. Natl. Acad. Sci. U.S.A.">
        <title>The human olfactory receptor gene family.</title>
        <authorList>
            <person name="Malnic B."/>
            <person name="Godfrey P.A."/>
            <person name="Buck L.B."/>
        </authorList>
    </citation>
    <scope>IDENTIFICATION</scope>
</reference>
<reference key="4">
    <citation type="journal article" date="2004" name="Proc. Natl. Acad. Sci. U.S.A.">
        <authorList>
            <person name="Malnic B."/>
            <person name="Godfrey P.A."/>
            <person name="Buck L.B."/>
        </authorList>
    </citation>
    <scope>ERRATUM OF PUBMED:14983052</scope>
</reference>
<proteinExistence type="inferred from homology"/>
<protein>
    <recommendedName>
        <fullName evidence="4">Olfactory receptor 4E2</fullName>
    </recommendedName>
    <alternativeName>
        <fullName>Olfactory receptor OR14-42</fullName>
    </alternativeName>
</protein>
<dbReference type="EMBL" id="AB065895">
    <property type="protein sequence ID" value="BAC06111.1"/>
    <property type="molecule type" value="Genomic_DNA"/>
</dbReference>
<dbReference type="EMBL" id="AF399581">
    <property type="protein sequence ID" value="AAK95066.1"/>
    <property type="molecule type" value="Genomic_DNA"/>
</dbReference>
<dbReference type="EMBL" id="BK004526">
    <property type="protein sequence ID" value="DAA04924.1"/>
    <property type="molecule type" value="Genomic_DNA"/>
</dbReference>
<dbReference type="CCDS" id="CCDS41916.1"/>
<dbReference type="SMR" id="Q8NGC2"/>
<dbReference type="FunCoup" id="Q8NGC2">
    <property type="interactions" value="1"/>
</dbReference>
<dbReference type="STRING" id="9606.ENSP00000493386"/>
<dbReference type="GlyCosmos" id="Q8NGC2">
    <property type="glycosylation" value="1 site, No reported glycans"/>
</dbReference>
<dbReference type="GlyGen" id="Q8NGC2">
    <property type="glycosylation" value="1 site"/>
</dbReference>
<dbReference type="iPTMnet" id="Q8NGC2"/>
<dbReference type="PhosphoSitePlus" id="Q8NGC2"/>
<dbReference type="BioMuta" id="OR4E2"/>
<dbReference type="DMDM" id="38372663"/>
<dbReference type="PaxDb" id="9606-ENSP00000386195"/>
<dbReference type="Antibodypedia" id="58801">
    <property type="antibodies" value="39 antibodies from 14 providers"/>
</dbReference>
<dbReference type="DNASU" id="26686"/>
<dbReference type="UCSC" id="uc010tmd.2">
    <property type="organism name" value="human"/>
</dbReference>
<dbReference type="AGR" id="HGNC:8297"/>
<dbReference type="GeneCards" id="OR4E2"/>
<dbReference type="HGNC" id="HGNC:8297">
    <property type="gene designation" value="OR4E2"/>
</dbReference>
<dbReference type="neXtProt" id="NX_Q8NGC2"/>
<dbReference type="PharmGKB" id="PA32278"/>
<dbReference type="VEuPathDB" id="HostDB:ENSG00000221977"/>
<dbReference type="eggNOG" id="ENOG502RCGN">
    <property type="taxonomic scope" value="Eukaryota"/>
</dbReference>
<dbReference type="HOGENOM" id="CLU_012526_8_1_1"/>
<dbReference type="InParanoid" id="Q8NGC2"/>
<dbReference type="OrthoDB" id="10017003at2759"/>
<dbReference type="PAN-GO" id="Q8NGC2">
    <property type="GO annotations" value="4 GO annotations based on evolutionary models"/>
</dbReference>
<dbReference type="PhylomeDB" id="Q8NGC2"/>
<dbReference type="TreeFam" id="TF337251"/>
<dbReference type="PathwayCommons" id="Q8NGC2"/>
<dbReference type="Reactome" id="R-HSA-9752946">
    <property type="pathway name" value="Expression and translocation of olfactory receptors"/>
</dbReference>
<dbReference type="Pharos" id="Q8NGC2">
    <property type="development level" value="Tdark"/>
</dbReference>
<dbReference type="PRO" id="PR:Q8NGC2"/>
<dbReference type="Proteomes" id="UP000005640">
    <property type="component" value="Chromosome 14"/>
</dbReference>
<dbReference type="RNAct" id="Q8NGC2">
    <property type="molecule type" value="protein"/>
</dbReference>
<dbReference type="GO" id="GO:0016020">
    <property type="term" value="C:membrane"/>
    <property type="evidence" value="ECO:0000318"/>
    <property type="project" value="GO_Central"/>
</dbReference>
<dbReference type="GO" id="GO:0005886">
    <property type="term" value="C:plasma membrane"/>
    <property type="evidence" value="ECO:0007669"/>
    <property type="project" value="UniProtKB-SubCell"/>
</dbReference>
<dbReference type="GO" id="GO:0004930">
    <property type="term" value="F:G protein-coupled receptor activity"/>
    <property type="evidence" value="ECO:0007669"/>
    <property type="project" value="UniProtKB-KW"/>
</dbReference>
<dbReference type="GO" id="GO:0046872">
    <property type="term" value="F:metal ion binding"/>
    <property type="evidence" value="ECO:0007669"/>
    <property type="project" value="UniProtKB-KW"/>
</dbReference>
<dbReference type="GO" id="GO:0005549">
    <property type="term" value="F:odorant binding"/>
    <property type="evidence" value="ECO:0000318"/>
    <property type="project" value="GO_Central"/>
</dbReference>
<dbReference type="GO" id="GO:0004984">
    <property type="term" value="F:olfactory receptor activity"/>
    <property type="evidence" value="ECO:0000318"/>
    <property type="project" value="GO_Central"/>
</dbReference>
<dbReference type="GO" id="GO:0050911">
    <property type="term" value="P:detection of chemical stimulus involved in sensory perception of smell"/>
    <property type="evidence" value="ECO:0000318"/>
    <property type="project" value="GO_Central"/>
</dbReference>
<dbReference type="CDD" id="cd15940">
    <property type="entry name" value="7tmA_OR4E-like"/>
    <property type="match status" value="1"/>
</dbReference>
<dbReference type="FunFam" id="1.10.1220.70:FF:000001">
    <property type="entry name" value="Olfactory receptor"/>
    <property type="match status" value="1"/>
</dbReference>
<dbReference type="FunFam" id="1.20.1070.10:FF:000007">
    <property type="entry name" value="Olfactory receptor"/>
    <property type="match status" value="1"/>
</dbReference>
<dbReference type="Gene3D" id="1.20.1070.10">
    <property type="entry name" value="Rhodopsin 7-helix transmembrane proteins"/>
    <property type="match status" value="1"/>
</dbReference>
<dbReference type="InterPro" id="IPR000276">
    <property type="entry name" value="GPCR_Rhodpsn"/>
</dbReference>
<dbReference type="InterPro" id="IPR017452">
    <property type="entry name" value="GPCR_Rhodpsn_7TM"/>
</dbReference>
<dbReference type="InterPro" id="IPR000725">
    <property type="entry name" value="Olfact_rcpt"/>
</dbReference>
<dbReference type="InterPro" id="IPR050427">
    <property type="entry name" value="Olfactory_Receptors"/>
</dbReference>
<dbReference type="PANTHER" id="PTHR48002">
    <property type="entry name" value="OLFACTORY RECEPTOR"/>
    <property type="match status" value="1"/>
</dbReference>
<dbReference type="Pfam" id="PF13853">
    <property type="entry name" value="7tm_4"/>
    <property type="match status" value="1"/>
</dbReference>
<dbReference type="PRINTS" id="PR00237">
    <property type="entry name" value="GPCRRHODOPSN"/>
</dbReference>
<dbReference type="PRINTS" id="PR00245">
    <property type="entry name" value="OLFACTORYR"/>
</dbReference>
<dbReference type="SMART" id="SM01381">
    <property type="entry name" value="7TM_GPCR_Srsx"/>
    <property type="match status" value="1"/>
</dbReference>
<dbReference type="SUPFAM" id="SSF81321">
    <property type="entry name" value="Family A G protein-coupled receptor-like"/>
    <property type="match status" value="1"/>
</dbReference>
<dbReference type="PROSITE" id="PS00237">
    <property type="entry name" value="G_PROTEIN_RECEP_F1_1"/>
    <property type="match status" value="1"/>
</dbReference>
<dbReference type="PROSITE" id="PS50262">
    <property type="entry name" value="G_PROTEIN_RECEP_F1_2"/>
    <property type="match status" value="1"/>
</dbReference>